<protein>
    <recommendedName>
        <fullName>Cysteine protease-like VirA</fullName>
        <ecNumber>3.4.22.-</ecNumber>
    </recommendedName>
    <alternativeName>
        <fullName>Effector protein VirA</fullName>
    </alternativeName>
</protein>
<comment type="function">
    <text evidence="1">Alpha-tubulin-specific protease that is required for entry into epithelial cells and for subsequent intra- and intercellular spreading. Contributes to bacterial entry into epithelial cells by inducing microtubule (MT) destabilization and the formation of membrane ruffles. The membrane ruffling evoked by VirA results from the activation of host rac1, which is associated with the destruction of MT networks. Creates a tunnel inside the host cell cytoplasm by breaking down the microtubule infrastructure. This facilitates the bacterium's movement through the cytoplasm and also helps other bacteria move faster during the invasion of the eukaryotic cell. Is absolutely required for virulence (By similarity).</text>
</comment>
<comment type="subunit">
    <text evidence="1">Monomer. Interacts specifically with alpha tubulin, a major component of microtubule (By similarity).</text>
</comment>
<comment type="subcellular location">
    <subcellularLocation>
        <location>Secreted</location>
    </subcellularLocation>
    <text evidence="1">Translocated into the host cell via the type III secretion system (T3SS). Localizes in the cytoplasm of the infected cell (By similarity).</text>
</comment>
<comment type="similarity">
    <text evidence="3">Belongs to the protease EspG/VirA family.</text>
</comment>
<keyword id="KW-0378">Hydrolase</keyword>
<keyword id="KW-0614">Plasmid</keyword>
<keyword id="KW-0645">Protease</keyword>
<keyword id="KW-1185">Reference proteome</keyword>
<keyword id="KW-0964">Secreted</keyword>
<keyword id="KW-0788">Thiol protease</keyword>
<keyword id="KW-0843">Virulence</keyword>
<sequence length="400" mass="44706">MQTSNITNHERNDSSWMSTVKSTTEVSWNKLSFCDVLLKIITFGIYSPHETLAEKYSEKKLMDSFSPSLSQDKMDGEFAHANIDGISIRLCLNKGICSVFYLDGDKIQSTQLSSKEYNNLLSSLPPKQFNLGKVHTITAPVSGNFKTHKPAPEVIETAINCCTSIIPNDDYFPVKDTDFNSVWHDIYRDIRASNSNSTKIYFNNIEIPLKLIADLINELGINEFIDSKKELQMLSYNQVNKIINSNFPQQDLCFQTEKLLFTSLFQDPAFISALTSAFWQSLHITSSSVEHIYAQIMSENIENRLNFMPEQRVINNCGHIIKINAVVPKNDTAISASGGRAYEVSSSILPSHITCNGVGINKIETSYLVHAGTLPSSEGLRNAIPPESRQVSFAIISPDV</sequence>
<proteinExistence type="inferred from homology"/>
<gene>
    <name type="primary">virA</name>
    <name type="ordered locus">SSON_P142</name>
</gene>
<evidence type="ECO:0000250" key="1"/>
<evidence type="ECO:0000255" key="2"/>
<evidence type="ECO:0000305" key="3"/>
<feature type="chain" id="PRO_0000297844" description="Cysteine protease-like VirA">
    <location>
        <begin position="1"/>
        <end position="400"/>
    </location>
</feature>
<feature type="region of interest" description="Tubulin-binding domain" evidence="1">
    <location>
        <begin position="224"/>
        <end position="315"/>
    </location>
</feature>
<feature type="active site" evidence="2">
    <location>
        <position position="34"/>
    </location>
</feature>
<reference key="1">
    <citation type="journal article" date="2005" name="Nucleic Acids Res.">
        <title>Genome dynamics and diversity of Shigella species, the etiologic agents of bacillary dysentery.</title>
        <authorList>
            <person name="Yang F."/>
            <person name="Yang J."/>
            <person name="Zhang X."/>
            <person name="Chen L."/>
            <person name="Jiang Y."/>
            <person name="Yan Y."/>
            <person name="Tang X."/>
            <person name="Wang J."/>
            <person name="Xiong Z."/>
            <person name="Dong J."/>
            <person name="Xue Y."/>
            <person name="Zhu Y."/>
            <person name="Xu X."/>
            <person name="Sun L."/>
            <person name="Chen S."/>
            <person name="Nie H."/>
            <person name="Peng J."/>
            <person name="Xu J."/>
            <person name="Wang Y."/>
            <person name="Yuan Z."/>
            <person name="Wen Y."/>
            <person name="Yao Z."/>
            <person name="Shen Y."/>
            <person name="Qiang B."/>
            <person name="Hou Y."/>
            <person name="Yu J."/>
            <person name="Jin Q."/>
        </authorList>
    </citation>
    <scope>NUCLEOTIDE SEQUENCE [LARGE SCALE GENOMIC DNA]</scope>
    <source>
        <strain>Ss046</strain>
    </source>
</reference>
<reference key="2">
    <citation type="journal article" date="2005" name="Plasmid">
        <title>The complete sequence and analysis of the large virulence plasmid pSS of Shigella sonnei.</title>
        <authorList>
            <person name="Jiang Y."/>
            <person name="Yang F."/>
            <person name="Zhang X."/>
            <person name="Yang J."/>
            <person name="Chen L."/>
            <person name="Yan Y."/>
            <person name="Nie H."/>
            <person name="Xiong Z."/>
            <person name="Wang J."/>
            <person name="Dong J."/>
            <person name="Xue Y."/>
            <person name="Xu X."/>
            <person name="Zhu Y."/>
            <person name="Chen S."/>
            <person name="Jin Q."/>
        </authorList>
    </citation>
    <scope>NUCLEOTIDE SEQUENCE [LARGE SCALE GENOMIC DNA]</scope>
    <source>
        <strain>Ss046</strain>
    </source>
</reference>
<accession>Q3YTK0</accession>
<organism>
    <name type="scientific">Shigella sonnei (strain Ss046)</name>
    <dbReference type="NCBI Taxonomy" id="300269"/>
    <lineage>
        <taxon>Bacteria</taxon>
        <taxon>Pseudomonadati</taxon>
        <taxon>Pseudomonadota</taxon>
        <taxon>Gammaproteobacteria</taxon>
        <taxon>Enterobacterales</taxon>
        <taxon>Enterobacteriaceae</taxon>
        <taxon>Shigella</taxon>
    </lineage>
</organism>
<dbReference type="EC" id="3.4.22.-"/>
<dbReference type="EMBL" id="CP000039">
    <property type="protein sequence ID" value="AAZ91162.1"/>
    <property type="molecule type" value="Genomic_DNA"/>
</dbReference>
<dbReference type="RefSeq" id="WP_001195010.1">
    <property type="nucleotide sequence ID" value="NC_007385.1"/>
</dbReference>
<dbReference type="SMR" id="Q3YTK0"/>
<dbReference type="KEGG" id="ssn:SSON_P142"/>
<dbReference type="HOGENOM" id="CLU_688663_0_0_6"/>
<dbReference type="Proteomes" id="UP000002529">
    <property type="component" value="Plasmid pSS_046"/>
</dbReference>
<dbReference type="GO" id="GO:0005576">
    <property type="term" value="C:extracellular region"/>
    <property type="evidence" value="ECO:0007669"/>
    <property type="project" value="UniProtKB-SubCell"/>
</dbReference>
<dbReference type="GO" id="GO:0004197">
    <property type="term" value="F:cysteine-type endopeptidase activity"/>
    <property type="evidence" value="ECO:0007669"/>
    <property type="project" value="InterPro"/>
</dbReference>
<dbReference type="GO" id="GO:0006508">
    <property type="term" value="P:proteolysis"/>
    <property type="evidence" value="ECO:0007669"/>
    <property type="project" value="UniProtKB-KW"/>
</dbReference>
<dbReference type="Gene3D" id="3.10.450.460">
    <property type="entry name" value="EspG protein, N-terminal domain"/>
    <property type="match status" value="1"/>
</dbReference>
<dbReference type="InterPro" id="IPR009669">
    <property type="entry name" value="Cys_protease_VirA/EspG"/>
</dbReference>
<dbReference type="InterPro" id="IPR043098">
    <property type="entry name" value="Cys_protease_VirA/EspG_N"/>
</dbReference>
<dbReference type="Pfam" id="PF06872">
    <property type="entry name" value="EspG"/>
    <property type="match status" value="1"/>
</dbReference>
<dbReference type="PIRSF" id="PIRSF011515">
    <property type="entry name" value="EspG"/>
    <property type="match status" value="1"/>
</dbReference>
<geneLocation type="plasmid">
    <name>pSS_046</name>
</geneLocation>
<name>VIRA_SHISS</name>